<evidence type="ECO:0000255" key="1">
    <source>
        <dbReference type="HAMAP-Rule" id="MF_00508"/>
    </source>
</evidence>
<evidence type="ECO:0000305" key="2"/>
<organism>
    <name type="scientific">Clostridium perfringens (strain ATCC 13124 / DSM 756 / JCM 1290 / NCIMB 6125 / NCTC 8237 / Type A)</name>
    <dbReference type="NCBI Taxonomy" id="195103"/>
    <lineage>
        <taxon>Bacteria</taxon>
        <taxon>Bacillati</taxon>
        <taxon>Bacillota</taxon>
        <taxon>Clostridia</taxon>
        <taxon>Eubacteriales</taxon>
        <taxon>Clostridiaceae</taxon>
        <taxon>Clostridium</taxon>
    </lineage>
</organism>
<feature type="chain" id="PRO_0000258543" description="Small ribosomal subunit protein uS10">
    <location>
        <begin position="1"/>
        <end position="102"/>
    </location>
</feature>
<reference key="1">
    <citation type="journal article" date="2006" name="Genome Res.">
        <title>Skewed genomic variability in strains of the toxigenic bacterial pathogen, Clostridium perfringens.</title>
        <authorList>
            <person name="Myers G.S.A."/>
            <person name="Rasko D.A."/>
            <person name="Cheung J.K."/>
            <person name="Ravel J."/>
            <person name="Seshadri R."/>
            <person name="DeBoy R.T."/>
            <person name="Ren Q."/>
            <person name="Varga J."/>
            <person name="Awad M.M."/>
            <person name="Brinkac L.M."/>
            <person name="Daugherty S.C."/>
            <person name="Haft D.H."/>
            <person name="Dodson R.J."/>
            <person name="Madupu R."/>
            <person name="Nelson W.C."/>
            <person name="Rosovitz M.J."/>
            <person name="Sullivan S.A."/>
            <person name="Khouri H."/>
            <person name="Dimitrov G.I."/>
            <person name="Watkins K.L."/>
            <person name="Mulligan S."/>
            <person name="Benton J."/>
            <person name="Radune D."/>
            <person name="Fisher D.J."/>
            <person name="Atkins H.S."/>
            <person name="Hiscox T."/>
            <person name="Jost B.H."/>
            <person name="Billington S.J."/>
            <person name="Songer J.G."/>
            <person name="McClane B.A."/>
            <person name="Titball R.W."/>
            <person name="Rood J.I."/>
            <person name="Melville S.B."/>
            <person name="Paulsen I.T."/>
        </authorList>
    </citation>
    <scope>NUCLEOTIDE SEQUENCE [LARGE SCALE GENOMIC DNA]</scope>
    <source>
        <strain>ATCC 13124 / DSM 756 / JCM 1290 / NCIMB 6125 / NCTC 8237 / S 107 / Type A</strain>
    </source>
</reference>
<gene>
    <name evidence="1" type="primary">rpsJ</name>
    <name type="ordered locus">CPF_2715</name>
</gene>
<accession>Q0TMP5</accession>
<protein>
    <recommendedName>
        <fullName evidence="1">Small ribosomal subunit protein uS10</fullName>
    </recommendedName>
    <alternativeName>
        <fullName evidence="2">30S ribosomal protein S10</fullName>
    </alternativeName>
</protein>
<proteinExistence type="inferred from homology"/>
<comment type="function">
    <text evidence="1">Involved in the binding of tRNA to the ribosomes.</text>
</comment>
<comment type="subunit">
    <text evidence="1">Part of the 30S ribosomal subunit.</text>
</comment>
<comment type="similarity">
    <text evidence="1">Belongs to the universal ribosomal protein uS10 family.</text>
</comment>
<sequence>MSKQKIRIRLKAFDHTILDQSAEKIVETAKSTGAKVVGPVPLPTEKDVITILRAVHKYKDSREQFEVRTHKRLIDIVNPSPKTVDALMRLNLPAGVDIEIKL</sequence>
<keyword id="KW-0687">Ribonucleoprotein</keyword>
<keyword id="KW-0689">Ribosomal protein</keyword>
<dbReference type="EMBL" id="CP000246">
    <property type="protein sequence ID" value="ABG83160.1"/>
    <property type="molecule type" value="Genomic_DNA"/>
</dbReference>
<dbReference type="RefSeq" id="WP_003479233.1">
    <property type="nucleotide sequence ID" value="NC_008261.1"/>
</dbReference>
<dbReference type="SMR" id="Q0TMP5"/>
<dbReference type="STRING" id="195103.CPF_2715"/>
<dbReference type="PaxDb" id="195103-CPF_2715"/>
<dbReference type="GeneID" id="93001008"/>
<dbReference type="KEGG" id="cpf:CPF_2715"/>
<dbReference type="eggNOG" id="COG0051">
    <property type="taxonomic scope" value="Bacteria"/>
</dbReference>
<dbReference type="HOGENOM" id="CLU_122625_1_3_9"/>
<dbReference type="Proteomes" id="UP000001823">
    <property type="component" value="Chromosome"/>
</dbReference>
<dbReference type="GO" id="GO:1990904">
    <property type="term" value="C:ribonucleoprotein complex"/>
    <property type="evidence" value="ECO:0007669"/>
    <property type="project" value="UniProtKB-KW"/>
</dbReference>
<dbReference type="GO" id="GO:0005840">
    <property type="term" value="C:ribosome"/>
    <property type="evidence" value="ECO:0007669"/>
    <property type="project" value="UniProtKB-KW"/>
</dbReference>
<dbReference type="GO" id="GO:0003735">
    <property type="term" value="F:structural constituent of ribosome"/>
    <property type="evidence" value="ECO:0007669"/>
    <property type="project" value="InterPro"/>
</dbReference>
<dbReference type="GO" id="GO:0000049">
    <property type="term" value="F:tRNA binding"/>
    <property type="evidence" value="ECO:0007669"/>
    <property type="project" value="UniProtKB-UniRule"/>
</dbReference>
<dbReference type="GO" id="GO:0006412">
    <property type="term" value="P:translation"/>
    <property type="evidence" value="ECO:0007669"/>
    <property type="project" value="UniProtKB-UniRule"/>
</dbReference>
<dbReference type="FunFam" id="3.30.70.600:FF:000001">
    <property type="entry name" value="30S ribosomal protein S10"/>
    <property type="match status" value="1"/>
</dbReference>
<dbReference type="Gene3D" id="3.30.70.600">
    <property type="entry name" value="Ribosomal protein S10 domain"/>
    <property type="match status" value="1"/>
</dbReference>
<dbReference type="HAMAP" id="MF_00508">
    <property type="entry name" value="Ribosomal_uS10"/>
    <property type="match status" value="1"/>
</dbReference>
<dbReference type="InterPro" id="IPR001848">
    <property type="entry name" value="Ribosomal_uS10"/>
</dbReference>
<dbReference type="InterPro" id="IPR018268">
    <property type="entry name" value="Ribosomal_uS10_CS"/>
</dbReference>
<dbReference type="InterPro" id="IPR027486">
    <property type="entry name" value="Ribosomal_uS10_dom"/>
</dbReference>
<dbReference type="InterPro" id="IPR036838">
    <property type="entry name" value="Ribosomal_uS10_dom_sf"/>
</dbReference>
<dbReference type="NCBIfam" id="NF001861">
    <property type="entry name" value="PRK00596.1"/>
    <property type="match status" value="1"/>
</dbReference>
<dbReference type="NCBIfam" id="TIGR01049">
    <property type="entry name" value="rpsJ_bact"/>
    <property type="match status" value="1"/>
</dbReference>
<dbReference type="PANTHER" id="PTHR11700">
    <property type="entry name" value="30S RIBOSOMAL PROTEIN S10 FAMILY MEMBER"/>
    <property type="match status" value="1"/>
</dbReference>
<dbReference type="Pfam" id="PF00338">
    <property type="entry name" value="Ribosomal_S10"/>
    <property type="match status" value="1"/>
</dbReference>
<dbReference type="PRINTS" id="PR00971">
    <property type="entry name" value="RIBOSOMALS10"/>
</dbReference>
<dbReference type="SMART" id="SM01403">
    <property type="entry name" value="Ribosomal_S10"/>
    <property type="match status" value="1"/>
</dbReference>
<dbReference type="SUPFAM" id="SSF54999">
    <property type="entry name" value="Ribosomal protein S10"/>
    <property type="match status" value="1"/>
</dbReference>
<dbReference type="PROSITE" id="PS00361">
    <property type="entry name" value="RIBOSOMAL_S10"/>
    <property type="match status" value="1"/>
</dbReference>
<name>RS10_CLOP1</name>